<sequence>MAAGGRMEDGSLDITQSIEDDPLLDAQLLPHHSLQAHFRPRFHPLPTVIIVNLLWFIHLVFVVLAFLTGVLCSYPNPNEDKCPGNYTNPLKVQTVIILGKVILWILHLLLECYIQYHHSKIRNRGYNLIYRSTRHLKRLALMIQSSGNTVLLLILCMQHSFPEPGRLYLDLILAILALELICSLICLLIYTVKIRRFNKAKPEPDILEEEKIYAYPSNITSETGFRTISSLEEIVEKQGDTIEYLKRHNALLSKRLLALTSSDLGCQPSRT</sequence>
<name>TM192_HUMAN</name>
<comment type="subunit">
    <text evidence="6">Homodimer.</text>
</comment>
<comment type="subcellular location">
    <subcellularLocation>
        <location evidence="2 3">Lysosome membrane</location>
        <topology evidence="2">Multi-pass membrane protein</topology>
    </subcellularLocation>
    <subcellularLocation>
        <location evidence="3">Late endosome</location>
    </subcellularLocation>
</comment>
<comment type="alternative products">
    <event type="alternative splicing"/>
    <isoform>
        <id>Q8IY95-1</id>
        <name>1</name>
        <sequence type="displayed"/>
    </isoform>
    <isoform>
        <id>Q8IY95-2</id>
        <name>2</name>
        <sequence type="described" ref="VSP_029502"/>
    </isoform>
</comment>
<comment type="tissue specificity">
    <text evidence="3">Strongly expressed in kidney, liver, lung and pancreas.</text>
</comment>
<comment type="PTM">
    <text>Not N-glycosylated.</text>
</comment>
<comment type="similarity">
    <text evidence="5">Belongs to the TMEM192 family.</text>
</comment>
<comment type="sequence caution" evidence="5">
    <conflict type="erroneous initiation">
        <sequence resource="EMBL-CDS" id="CAD97974"/>
    </conflict>
</comment>
<organism>
    <name type="scientific">Homo sapiens</name>
    <name type="common">Human</name>
    <dbReference type="NCBI Taxonomy" id="9606"/>
    <lineage>
        <taxon>Eukaryota</taxon>
        <taxon>Metazoa</taxon>
        <taxon>Chordata</taxon>
        <taxon>Craniata</taxon>
        <taxon>Vertebrata</taxon>
        <taxon>Euteleostomi</taxon>
        <taxon>Mammalia</taxon>
        <taxon>Eutheria</taxon>
        <taxon>Euarchontoglires</taxon>
        <taxon>Primates</taxon>
        <taxon>Haplorrhini</taxon>
        <taxon>Catarrhini</taxon>
        <taxon>Hominidae</taxon>
        <taxon>Homo</taxon>
    </lineage>
</organism>
<proteinExistence type="evidence at protein level"/>
<reference key="1">
    <citation type="journal article" date="2004" name="Nat. Genet.">
        <title>Complete sequencing and characterization of 21,243 full-length human cDNAs.</title>
        <authorList>
            <person name="Ota T."/>
            <person name="Suzuki Y."/>
            <person name="Nishikawa T."/>
            <person name="Otsuki T."/>
            <person name="Sugiyama T."/>
            <person name="Irie R."/>
            <person name="Wakamatsu A."/>
            <person name="Hayashi K."/>
            <person name="Sato H."/>
            <person name="Nagai K."/>
            <person name="Kimura K."/>
            <person name="Makita H."/>
            <person name="Sekine M."/>
            <person name="Obayashi M."/>
            <person name="Nishi T."/>
            <person name="Shibahara T."/>
            <person name="Tanaka T."/>
            <person name="Ishii S."/>
            <person name="Yamamoto J."/>
            <person name="Saito K."/>
            <person name="Kawai Y."/>
            <person name="Isono Y."/>
            <person name="Nakamura Y."/>
            <person name="Nagahari K."/>
            <person name="Murakami K."/>
            <person name="Yasuda T."/>
            <person name="Iwayanagi T."/>
            <person name="Wagatsuma M."/>
            <person name="Shiratori A."/>
            <person name="Sudo H."/>
            <person name="Hosoiri T."/>
            <person name="Kaku Y."/>
            <person name="Kodaira H."/>
            <person name="Kondo H."/>
            <person name="Sugawara M."/>
            <person name="Takahashi M."/>
            <person name="Kanda K."/>
            <person name="Yokoi T."/>
            <person name="Furuya T."/>
            <person name="Kikkawa E."/>
            <person name="Omura Y."/>
            <person name="Abe K."/>
            <person name="Kamihara K."/>
            <person name="Katsuta N."/>
            <person name="Sato K."/>
            <person name="Tanikawa M."/>
            <person name="Yamazaki M."/>
            <person name="Ninomiya K."/>
            <person name="Ishibashi T."/>
            <person name="Yamashita H."/>
            <person name="Murakawa K."/>
            <person name="Fujimori K."/>
            <person name="Tanai H."/>
            <person name="Kimata M."/>
            <person name="Watanabe M."/>
            <person name="Hiraoka S."/>
            <person name="Chiba Y."/>
            <person name="Ishida S."/>
            <person name="Ono Y."/>
            <person name="Takiguchi S."/>
            <person name="Watanabe S."/>
            <person name="Yosida M."/>
            <person name="Hotuta T."/>
            <person name="Kusano J."/>
            <person name="Kanehori K."/>
            <person name="Takahashi-Fujii A."/>
            <person name="Hara H."/>
            <person name="Tanase T.-O."/>
            <person name="Nomura Y."/>
            <person name="Togiya S."/>
            <person name="Komai F."/>
            <person name="Hara R."/>
            <person name="Takeuchi K."/>
            <person name="Arita M."/>
            <person name="Imose N."/>
            <person name="Musashino K."/>
            <person name="Yuuki H."/>
            <person name="Oshima A."/>
            <person name="Sasaki N."/>
            <person name="Aotsuka S."/>
            <person name="Yoshikawa Y."/>
            <person name="Matsunawa H."/>
            <person name="Ichihara T."/>
            <person name="Shiohata N."/>
            <person name="Sano S."/>
            <person name="Moriya S."/>
            <person name="Momiyama H."/>
            <person name="Satoh N."/>
            <person name="Takami S."/>
            <person name="Terashima Y."/>
            <person name="Suzuki O."/>
            <person name="Nakagawa S."/>
            <person name="Senoh A."/>
            <person name="Mizoguchi H."/>
            <person name="Goto Y."/>
            <person name="Shimizu F."/>
            <person name="Wakebe H."/>
            <person name="Hishigaki H."/>
            <person name="Watanabe T."/>
            <person name="Sugiyama A."/>
            <person name="Takemoto M."/>
            <person name="Kawakami B."/>
            <person name="Yamazaki M."/>
            <person name="Watanabe K."/>
            <person name="Kumagai A."/>
            <person name="Itakura S."/>
            <person name="Fukuzumi Y."/>
            <person name="Fujimori Y."/>
            <person name="Komiyama M."/>
            <person name="Tashiro H."/>
            <person name="Tanigami A."/>
            <person name="Fujiwara T."/>
            <person name="Ono T."/>
            <person name="Yamada K."/>
            <person name="Fujii Y."/>
            <person name="Ozaki K."/>
            <person name="Hirao M."/>
            <person name="Ohmori Y."/>
            <person name="Kawabata A."/>
            <person name="Hikiji T."/>
            <person name="Kobatake N."/>
            <person name="Inagaki H."/>
            <person name="Ikema Y."/>
            <person name="Okamoto S."/>
            <person name="Okitani R."/>
            <person name="Kawakami T."/>
            <person name="Noguchi S."/>
            <person name="Itoh T."/>
            <person name="Shigeta K."/>
            <person name="Senba T."/>
            <person name="Matsumura K."/>
            <person name="Nakajima Y."/>
            <person name="Mizuno T."/>
            <person name="Morinaga M."/>
            <person name="Sasaki M."/>
            <person name="Togashi T."/>
            <person name="Oyama M."/>
            <person name="Hata H."/>
            <person name="Watanabe M."/>
            <person name="Komatsu T."/>
            <person name="Mizushima-Sugano J."/>
            <person name="Satoh T."/>
            <person name="Shirai Y."/>
            <person name="Takahashi Y."/>
            <person name="Nakagawa K."/>
            <person name="Okumura K."/>
            <person name="Nagase T."/>
            <person name="Nomura N."/>
            <person name="Kikuchi H."/>
            <person name="Masuho Y."/>
            <person name="Yamashita R."/>
            <person name="Nakai K."/>
            <person name="Yada T."/>
            <person name="Nakamura Y."/>
            <person name="Ohara O."/>
            <person name="Isogai T."/>
            <person name="Sugano S."/>
        </authorList>
    </citation>
    <scope>NUCLEOTIDE SEQUENCE [LARGE SCALE MRNA] (ISOFORM 2)</scope>
    <source>
        <tissue>Brain</tissue>
    </source>
</reference>
<reference key="2">
    <citation type="journal article" date="2007" name="BMC Genomics">
        <title>The full-ORF clone resource of the German cDNA consortium.</title>
        <authorList>
            <person name="Bechtel S."/>
            <person name="Rosenfelder H."/>
            <person name="Duda A."/>
            <person name="Schmidt C.P."/>
            <person name="Ernst U."/>
            <person name="Wellenreuther R."/>
            <person name="Mehrle A."/>
            <person name="Schuster C."/>
            <person name="Bahr A."/>
            <person name="Bloecker H."/>
            <person name="Heubner D."/>
            <person name="Hoerlein A."/>
            <person name="Michel G."/>
            <person name="Wedler H."/>
            <person name="Koehrer K."/>
            <person name="Ottenwaelder B."/>
            <person name="Poustka A."/>
            <person name="Wiemann S."/>
            <person name="Schupp I."/>
        </authorList>
    </citation>
    <scope>NUCLEOTIDE SEQUENCE [LARGE SCALE MRNA] (ISOFORM 1)</scope>
    <source>
        <tissue>Endometrial tumor</tissue>
    </source>
</reference>
<reference key="3">
    <citation type="submission" date="2005-09" db="EMBL/GenBank/DDBJ databases">
        <authorList>
            <person name="Mural R.J."/>
            <person name="Istrail S."/>
            <person name="Sutton G.G."/>
            <person name="Florea L."/>
            <person name="Halpern A.L."/>
            <person name="Mobarry C.M."/>
            <person name="Lippert R."/>
            <person name="Walenz B."/>
            <person name="Shatkay H."/>
            <person name="Dew I."/>
            <person name="Miller J.R."/>
            <person name="Flanigan M.J."/>
            <person name="Edwards N.J."/>
            <person name="Bolanos R."/>
            <person name="Fasulo D."/>
            <person name="Halldorsson B.V."/>
            <person name="Hannenhalli S."/>
            <person name="Turner R."/>
            <person name="Yooseph S."/>
            <person name="Lu F."/>
            <person name="Nusskern D.R."/>
            <person name="Shue B.C."/>
            <person name="Zheng X.H."/>
            <person name="Zhong F."/>
            <person name="Delcher A.L."/>
            <person name="Huson D.H."/>
            <person name="Kravitz S.A."/>
            <person name="Mouchard L."/>
            <person name="Reinert K."/>
            <person name="Remington K.A."/>
            <person name="Clark A.G."/>
            <person name="Waterman M.S."/>
            <person name="Eichler E.E."/>
            <person name="Adams M.D."/>
            <person name="Hunkapiller M.W."/>
            <person name="Myers E.W."/>
            <person name="Venter J.C."/>
        </authorList>
    </citation>
    <scope>NUCLEOTIDE SEQUENCE [LARGE SCALE GENOMIC DNA]</scope>
</reference>
<reference key="4">
    <citation type="journal article" date="2004" name="Genome Res.">
        <title>The status, quality, and expansion of the NIH full-length cDNA project: the Mammalian Gene Collection (MGC).</title>
        <authorList>
            <consortium name="The MGC Project Team"/>
        </authorList>
    </citation>
    <scope>NUCLEOTIDE SEQUENCE [LARGE SCALE MRNA] (ISOFORM 1)</scope>
    <source>
        <tissue>Skin</tissue>
    </source>
</reference>
<reference key="5">
    <citation type="journal article" date="2007" name="Science">
        <title>ATM and ATR substrate analysis reveals extensive protein networks responsive to DNA damage.</title>
        <authorList>
            <person name="Matsuoka S."/>
            <person name="Ballif B.A."/>
            <person name="Smogorzewska A."/>
            <person name="McDonald E.R. III"/>
            <person name="Hurov K.E."/>
            <person name="Luo J."/>
            <person name="Bakalarski C.E."/>
            <person name="Zhao Z."/>
            <person name="Solimini N."/>
            <person name="Lerenthal Y."/>
            <person name="Shiloh Y."/>
            <person name="Gygi S.P."/>
            <person name="Elledge S.J."/>
        </authorList>
    </citation>
    <scope>PHOSPHORYLATION [LARGE SCALE ANALYSIS] AT THR-15 AND SER-17</scope>
    <scope>IDENTIFICATION BY MASS SPECTROMETRY [LARGE SCALE ANALYSIS]</scope>
    <source>
        <tissue>Embryonic kidney</tissue>
    </source>
</reference>
<reference key="6">
    <citation type="journal article" date="2007" name="Traffic">
        <title>Integral and associated lysosomal membrane proteins.</title>
        <authorList>
            <person name="Schroeder B."/>
            <person name="Wrocklage C."/>
            <person name="Pan C."/>
            <person name="Jaeger R."/>
            <person name="Koesters B."/>
            <person name="Schaefer H."/>
            <person name="Elsaesser H.-P."/>
            <person name="Mann M."/>
            <person name="Hasilik A."/>
        </authorList>
    </citation>
    <scope>SUBCELLULAR LOCATION [LARGE SCALE ANALYSIS]</scope>
    <source>
        <tissue>Placenta</tissue>
    </source>
</reference>
<reference key="7">
    <citation type="journal article" date="2009" name="Sci. Signal.">
        <title>Quantitative phosphoproteomic analysis of T cell receptor signaling reveals system-wide modulation of protein-protein interactions.</title>
        <authorList>
            <person name="Mayya V."/>
            <person name="Lundgren D.H."/>
            <person name="Hwang S.-I."/>
            <person name="Rezaul K."/>
            <person name="Wu L."/>
            <person name="Eng J.K."/>
            <person name="Rodionov V."/>
            <person name="Han D.K."/>
        </authorList>
    </citation>
    <scope>PHOSPHORYLATION [LARGE SCALE ANALYSIS] AT TYR-213</scope>
    <scope>IDENTIFICATION BY MASS SPECTROMETRY [LARGE SCALE ANALYSIS]</scope>
    <source>
        <tissue>Leukemic T-cell</tissue>
    </source>
</reference>
<reference key="8">
    <citation type="journal article" date="2010" name="Biol. Chem.">
        <title>Molecular characterisation of 'transmembrane protein 192' (TMEM192), a novel protein of the lysosomal membrane.</title>
        <authorList>
            <person name="Schroder B."/>
            <person name="Wrocklage C."/>
            <person name="Hasilik A."/>
            <person name="Saftig P."/>
        </authorList>
    </citation>
    <scope>SUBCELLULAR LOCATION</scope>
    <scope>SUBUNIT</scope>
    <scope>TISSUE SPECIFICITY</scope>
</reference>
<reference key="9">
    <citation type="journal article" date="2011" name="BMC Syst. Biol.">
        <title>Initial characterization of the human central proteome.</title>
        <authorList>
            <person name="Burkard T.R."/>
            <person name="Planyavsky M."/>
            <person name="Kaupe I."/>
            <person name="Breitwieser F.P."/>
            <person name="Buerckstuemmer T."/>
            <person name="Bennett K.L."/>
            <person name="Superti-Furga G."/>
            <person name="Colinge J."/>
        </authorList>
    </citation>
    <scope>IDENTIFICATION BY MASS SPECTROMETRY [LARGE SCALE ANALYSIS]</scope>
</reference>
<reference key="10">
    <citation type="journal article" date="2013" name="J. Proteome Res.">
        <title>Toward a comprehensive characterization of a human cancer cell phosphoproteome.</title>
        <authorList>
            <person name="Zhou H."/>
            <person name="Di Palma S."/>
            <person name="Preisinger C."/>
            <person name="Peng M."/>
            <person name="Polat A.N."/>
            <person name="Heck A.J."/>
            <person name="Mohammed S."/>
        </authorList>
    </citation>
    <scope>PHOSPHORYLATION [LARGE SCALE ANALYSIS] AT SER-229 AND SER-230</scope>
    <scope>IDENTIFICATION BY MASS SPECTROMETRY [LARGE SCALE ANALYSIS]</scope>
    <source>
        <tissue>Cervix carcinoma</tissue>
        <tissue>Erythroleukemia</tissue>
    </source>
</reference>
<reference key="11">
    <citation type="journal article" date="2014" name="J. Proteomics">
        <title>An enzyme assisted RP-RPLC approach for in-depth analysis of human liver phosphoproteome.</title>
        <authorList>
            <person name="Bian Y."/>
            <person name="Song C."/>
            <person name="Cheng K."/>
            <person name="Dong M."/>
            <person name="Wang F."/>
            <person name="Huang J."/>
            <person name="Sun D."/>
            <person name="Wang L."/>
            <person name="Ye M."/>
            <person name="Zou H."/>
        </authorList>
    </citation>
    <scope>PHOSPHORYLATION [LARGE SCALE ANALYSIS] AT SER-269</scope>
    <scope>IDENTIFICATION BY MASS SPECTROMETRY [LARGE SCALE ANALYSIS]</scope>
    <source>
        <tissue>Liver</tissue>
    </source>
</reference>
<feature type="chain" id="PRO_0000311267" description="Transmembrane protein 192">
    <location>
        <begin position="1"/>
        <end position="271"/>
    </location>
</feature>
<feature type="topological domain" description="Cytoplasmic" evidence="1">
    <location>
        <begin position="1"/>
        <end position="46"/>
    </location>
</feature>
<feature type="transmembrane region" description="Helical" evidence="1">
    <location>
        <begin position="47"/>
        <end position="67"/>
    </location>
</feature>
<feature type="topological domain" description="Lumenal" evidence="1">
    <location>
        <begin position="68"/>
        <end position="93"/>
    </location>
</feature>
<feature type="transmembrane region" description="Helical" evidence="1">
    <location>
        <begin position="94"/>
        <end position="114"/>
    </location>
</feature>
<feature type="topological domain" description="Cytoplasmic" evidence="1">
    <location>
        <begin position="115"/>
        <end position="138"/>
    </location>
</feature>
<feature type="transmembrane region" description="Helical" evidence="1">
    <location>
        <begin position="139"/>
        <end position="159"/>
    </location>
</feature>
<feature type="topological domain" description="Lumenal" evidence="1">
    <location>
        <begin position="160"/>
        <end position="171"/>
    </location>
</feature>
<feature type="transmembrane region" description="Helical" evidence="1">
    <location>
        <begin position="172"/>
        <end position="192"/>
    </location>
</feature>
<feature type="topological domain" description="Cytoplasmic" evidence="1">
    <location>
        <begin position="193"/>
        <end position="271"/>
    </location>
</feature>
<feature type="modified residue" description="Phosphothreonine" evidence="7">
    <location>
        <position position="15"/>
    </location>
</feature>
<feature type="modified residue" description="Phosphoserine" evidence="7">
    <location>
        <position position="17"/>
    </location>
</feature>
<feature type="modified residue" description="Phosphotyrosine" evidence="8">
    <location>
        <position position="213"/>
    </location>
</feature>
<feature type="modified residue" description="Phosphoserine" evidence="9">
    <location>
        <position position="229"/>
    </location>
</feature>
<feature type="modified residue" description="Phosphoserine" evidence="9">
    <location>
        <position position="230"/>
    </location>
</feature>
<feature type="modified residue" description="Phosphoserine" evidence="10">
    <location>
        <position position="269"/>
    </location>
</feature>
<feature type="splice variant" id="VSP_029502" description="In isoform 2." evidence="4">
    <original>MAAGGRMED</original>
    <variation>MNKAT</variation>
    <location>
        <begin position="1"/>
        <end position="9"/>
    </location>
</feature>
<feature type="sequence conflict" description="In Ref. 2; CAD97974." evidence="5" ref="2">
    <original>T</original>
    <variation>A</variation>
    <location>
        <position position="94"/>
    </location>
</feature>
<feature type="sequence conflict" description="In Ref. 2; CAD97974." evidence="5" ref="2">
    <original>E</original>
    <variation>K</variation>
    <location>
        <position position="163"/>
    </location>
</feature>
<feature type="sequence conflict" description="In Ref. 1; BAC04628." evidence="5" ref="1">
    <original>Y</original>
    <variation>C</variation>
    <location>
        <position position="190"/>
    </location>
</feature>
<protein>
    <recommendedName>
        <fullName>Transmembrane protein 192</fullName>
    </recommendedName>
</protein>
<keyword id="KW-0025">Alternative splicing</keyword>
<keyword id="KW-0967">Endosome</keyword>
<keyword id="KW-0458">Lysosome</keyword>
<keyword id="KW-0472">Membrane</keyword>
<keyword id="KW-0597">Phosphoprotein</keyword>
<keyword id="KW-1267">Proteomics identification</keyword>
<keyword id="KW-1185">Reference proteome</keyword>
<keyword id="KW-0812">Transmembrane</keyword>
<keyword id="KW-1133">Transmembrane helix</keyword>
<gene>
    <name type="primary">TMEM192</name>
</gene>
<dbReference type="EMBL" id="AK095801">
    <property type="protein sequence ID" value="BAC04628.1"/>
    <property type="molecule type" value="mRNA"/>
</dbReference>
<dbReference type="EMBL" id="BX538029">
    <property type="protein sequence ID" value="CAD97974.1"/>
    <property type="status" value="ALT_INIT"/>
    <property type="molecule type" value="mRNA"/>
</dbReference>
<dbReference type="EMBL" id="CH471056">
    <property type="protein sequence ID" value="EAX04826.1"/>
    <property type="molecule type" value="Genomic_DNA"/>
</dbReference>
<dbReference type="EMBL" id="BC036301">
    <property type="protein sequence ID" value="AAH36301.1"/>
    <property type="molecule type" value="mRNA"/>
</dbReference>
<dbReference type="CCDS" id="CCDS43279.1">
    <molecule id="Q8IY95-1"/>
</dbReference>
<dbReference type="RefSeq" id="NP_001093859.1">
    <molecule id="Q8IY95-1"/>
    <property type="nucleotide sequence ID" value="NM_001100389.2"/>
</dbReference>
<dbReference type="SMR" id="Q8IY95"/>
<dbReference type="BioGRID" id="128407">
    <property type="interactions" value="195"/>
</dbReference>
<dbReference type="FunCoup" id="Q8IY95">
    <property type="interactions" value="1721"/>
</dbReference>
<dbReference type="IntAct" id="Q8IY95">
    <property type="interactions" value="74"/>
</dbReference>
<dbReference type="MINT" id="Q8IY95"/>
<dbReference type="STRING" id="9606.ENSP00000305069"/>
<dbReference type="TCDB" id="9.B.134.1.1">
    <property type="family name" value="the lysosomal autophagy and apoptosis-related protein, tmem192 (tmem192) family"/>
</dbReference>
<dbReference type="GlyGen" id="Q8IY95">
    <property type="glycosylation" value="1 site, 1 O-linked glycan (1 site)"/>
</dbReference>
<dbReference type="iPTMnet" id="Q8IY95"/>
<dbReference type="PhosphoSitePlus" id="Q8IY95"/>
<dbReference type="SwissPalm" id="Q8IY95"/>
<dbReference type="BioMuta" id="TMEM192"/>
<dbReference type="DMDM" id="74728307"/>
<dbReference type="jPOST" id="Q8IY95"/>
<dbReference type="MassIVE" id="Q8IY95"/>
<dbReference type="PaxDb" id="9606-ENSP00000305069"/>
<dbReference type="PeptideAtlas" id="Q8IY95"/>
<dbReference type="ProteomicsDB" id="71129">
    <molecule id="Q8IY95-1"/>
</dbReference>
<dbReference type="ProteomicsDB" id="71130">
    <molecule id="Q8IY95-2"/>
</dbReference>
<dbReference type="Pumba" id="Q8IY95"/>
<dbReference type="Antibodypedia" id="7685">
    <property type="antibodies" value="89 antibodies from 25 providers"/>
</dbReference>
<dbReference type="DNASU" id="201931"/>
<dbReference type="Ensembl" id="ENST00000306480.11">
    <molecule id="Q8IY95-1"/>
    <property type="protein sequence ID" value="ENSP00000305069.4"/>
    <property type="gene ID" value="ENSG00000170088.14"/>
</dbReference>
<dbReference type="Ensembl" id="ENST00000506087.5">
    <molecule id="Q8IY95-2"/>
    <property type="protein sequence ID" value="ENSP00000425335.1"/>
    <property type="gene ID" value="ENSG00000170088.14"/>
</dbReference>
<dbReference type="GeneID" id="201931"/>
<dbReference type="KEGG" id="hsa:201931"/>
<dbReference type="MANE-Select" id="ENST00000306480.11">
    <property type="protein sequence ID" value="ENSP00000305069.4"/>
    <property type="RefSeq nucleotide sequence ID" value="NM_001100389.2"/>
    <property type="RefSeq protein sequence ID" value="NP_001093859.1"/>
</dbReference>
<dbReference type="UCSC" id="uc003iqz.5">
    <molecule id="Q8IY95-1"/>
    <property type="organism name" value="human"/>
</dbReference>
<dbReference type="AGR" id="HGNC:26775"/>
<dbReference type="CTD" id="201931"/>
<dbReference type="DisGeNET" id="201931"/>
<dbReference type="GeneCards" id="TMEM192"/>
<dbReference type="HGNC" id="HGNC:26775">
    <property type="gene designation" value="TMEM192"/>
</dbReference>
<dbReference type="HPA" id="ENSG00000170088">
    <property type="expression patterns" value="Low tissue specificity"/>
</dbReference>
<dbReference type="MIM" id="620677">
    <property type="type" value="gene"/>
</dbReference>
<dbReference type="neXtProt" id="NX_Q8IY95"/>
<dbReference type="OpenTargets" id="ENSG00000170088"/>
<dbReference type="PharmGKB" id="PA162406273"/>
<dbReference type="VEuPathDB" id="HostDB:ENSG00000170088"/>
<dbReference type="eggNOG" id="ENOG502RYVA">
    <property type="taxonomic scope" value="Eukaryota"/>
</dbReference>
<dbReference type="GeneTree" id="ENSGT00390000013749"/>
<dbReference type="HOGENOM" id="CLU_086771_0_0_1"/>
<dbReference type="InParanoid" id="Q8IY95"/>
<dbReference type="OMA" id="IGFRDEN"/>
<dbReference type="OrthoDB" id="6277625at2759"/>
<dbReference type="PAN-GO" id="Q8IY95">
    <property type="GO annotations" value="2 GO annotations based on evolutionary models"/>
</dbReference>
<dbReference type="PhylomeDB" id="Q8IY95"/>
<dbReference type="TreeFam" id="TF323773"/>
<dbReference type="PathwayCommons" id="Q8IY95"/>
<dbReference type="SignaLink" id="Q8IY95"/>
<dbReference type="BioGRID-ORCS" id="201931">
    <property type="hits" value="7 hits in 1156 CRISPR screens"/>
</dbReference>
<dbReference type="ChiTaRS" id="TMEM192">
    <property type="organism name" value="human"/>
</dbReference>
<dbReference type="GenomeRNAi" id="201931"/>
<dbReference type="Pharos" id="Q8IY95">
    <property type="development level" value="Tbio"/>
</dbReference>
<dbReference type="PRO" id="PR:Q8IY95"/>
<dbReference type="Proteomes" id="UP000005640">
    <property type="component" value="Chromosome 4"/>
</dbReference>
<dbReference type="RNAct" id="Q8IY95">
    <property type="molecule type" value="protein"/>
</dbReference>
<dbReference type="Bgee" id="ENSG00000170088">
    <property type="expression patterns" value="Expressed in caput epididymis and 184 other cell types or tissues"/>
</dbReference>
<dbReference type="ExpressionAtlas" id="Q8IY95">
    <property type="expression patterns" value="baseline and differential"/>
</dbReference>
<dbReference type="GO" id="GO:0005768">
    <property type="term" value="C:endosome"/>
    <property type="evidence" value="ECO:0000314"/>
    <property type="project" value="HPA"/>
</dbReference>
<dbReference type="GO" id="GO:0005770">
    <property type="term" value="C:late endosome"/>
    <property type="evidence" value="ECO:0000314"/>
    <property type="project" value="UniProtKB"/>
</dbReference>
<dbReference type="GO" id="GO:0005765">
    <property type="term" value="C:lysosomal membrane"/>
    <property type="evidence" value="ECO:0000314"/>
    <property type="project" value="UniProtKB"/>
</dbReference>
<dbReference type="GO" id="GO:0005764">
    <property type="term" value="C:lysosome"/>
    <property type="evidence" value="ECO:0000314"/>
    <property type="project" value="HPA"/>
</dbReference>
<dbReference type="GO" id="GO:0005654">
    <property type="term" value="C:nucleoplasm"/>
    <property type="evidence" value="ECO:0000314"/>
    <property type="project" value="HPA"/>
</dbReference>
<dbReference type="GO" id="GO:0048471">
    <property type="term" value="C:perinuclear region of cytoplasm"/>
    <property type="evidence" value="ECO:0000314"/>
    <property type="project" value="UniProtKB"/>
</dbReference>
<dbReference type="GO" id="GO:0042803">
    <property type="term" value="F:protein homodimerization activity"/>
    <property type="evidence" value="ECO:0000314"/>
    <property type="project" value="UniProtKB"/>
</dbReference>
<dbReference type="InterPro" id="IPR029399">
    <property type="entry name" value="TMEM192"/>
</dbReference>
<dbReference type="PANTHER" id="PTHR31592">
    <property type="entry name" value="TRANSMEMBRANE PROTEIN 192"/>
    <property type="match status" value="1"/>
</dbReference>
<dbReference type="PANTHER" id="PTHR31592:SF1">
    <property type="entry name" value="TRANSMEMBRANE PROTEIN 192"/>
    <property type="match status" value="1"/>
</dbReference>
<dbReference type="Pfam" id="PF14802">
    <property type="entry name" value="TMEM192"/>
    <property type="match status" value="1"/>
</dbReference>
<accession>Q8IY95</accession>
<accession>Q7Z3A1</accession>
<accession>Q8N928</accession>
<evidence type="ECO:0000255" key="1"/>
<evidence type="ECO:0000269" key="2">
    <source>
    </source>
</evidence>
<evidence type="ECO:0000269" key="3">
    <source>
    </source>
</evidence>
<evidence type="ECO:0000303" key="4">
    <source>
    </source>
</evidence>
<evidence type="ECO:0000305" key="5"/>
<evidence type="ECO:0000305" key="6">
    <source>
    </source>
</evidence>
<evidence type="ECO:0007744" key="7">
    <source>
    </source>
</evidence>
<evidence type="ECO:0007744" key="8">
    <source>
    </source>
</evidence>
<evidence type="ECO:0007744" key="9">
    <source>
    </source>
</evidence>
<evidence type="ECO:0007744" key="10">
    <source>
    </source>
</evidence>